<comment type="function">
    <text evidence="1">Pectinolytic enzyme consist of four classes of enzymes: pectin lyase, polygalacturonase, pectin methylesterase and rhamnogalacturonase. Among pectinolytic enzymes, pectin lyase is the most important in depolymerization of pectin, since it cleaves internal glycosidic bonds of highly methylated pectins. Favors pectate, the anion, over pectin, the methyl ester (By similarity).</text>
</comment>
<comment type="catalytic activity">
    <reaction>
        <text>Eliminative cleavage of (1-&gt;4)-alpha-D-galacturonan to give oligosaccharides with 4-deoxy-alpha-D-galact-4-enuronosyl groups at their non-reducing ends.</text>
        <dbReference type="EC" id="4.2.2.2"/>
    </reaction>
</comment>
<comment type="cofactor">
    <cofactor evidence="1">
        <name>Ca(2+)</name>
        <dbReference type="ChEBI" id="CHEBI:29108"/>
    </cofactor>
    <text evidence="1">Binds 1 Ca(2+) ion per subunit.</text>
</comment>
<comment type="subcellular location">
    <subcellularLocation>
        <location evidence="1">Secreted</location>
    </subcellularLocation>
</comment>
<comment type="similarity">
    <text evidence="4">Belongs to the polysaccharide lyase 3 family.</text>
</comment>
<protein>
    <recommendedName>
        <fullName>Probable pectate lyase D</fullName>
        <ecNumber>4.2.2.2</ecNumber>
    </recommendedName>
</protein>
<proteinExistence type="inferred from homology"/>
<reference key="1">
    <citation type="journal article" date="2005" name="Nature">
        <title>Sequencing of Aspergillus nidulans and comparative analysis with A. fumigatus and A. oryzae.</title>
        <authorList>
            <person name="Galagan J.E."/>
            <person name="Calvo S.E."/>
            <person name="Cuomo C."/>
            <person name="Ma L.-J."/>
            <person name="Wortman J.R."/>
            <person name="Batzoglou S."/>
            <person name="Lee S.-I."/>
            <person name="Bastuerkmen M."/>
            <person name="Spevak C.C."/>
            <person name="Clutterbuck J."/>
            <person name="Kapitonov V."/>
            <person name="Jurka J."/>
            <person name="Scazzocchio C."/>
            <person name="Farman M.L."/>
            <person name="Butler J."/>
            <person name="Purcell S."/>
            <person name="Harris S."/>
            <person name="Braus G.H."/>
            <person name="Draht O."/>
            <person name="Busch S."/>
            <person name="D'Enfert C."/>
            <person name="Bouchier C."/>
            <person name="Goldman G.H."/>
            <person name="Bell-Pedersen D."/>
            <person name="Griffiths-Jones S."/>
            <person name="Doonan J.H."/>
            <person name="Yu J."/>
            <person name="Vienken K."/>
            <person name="Pain A."/>
            <person name="Freitag M."/>
            <person name="Selker E.U."/>
            <person name="Archer D.B."/>
            <person name="Penalva M.A."/>
            <person name="Oakley B.R."/>
            <person name="Momany M."/>
            <person name="Tanaka T."/>
            <person name="Kumagai T."/>
            <person name="Asai K."/>
            <person name="Machida M."/>
            <person name="Nierman W.C."/>
            <person name="Denning D.W."/>
            <person name="Caddick M.X."/>
            <person name="Hynes M."/>
            <person name="Paoletti M."/>
            <person name="Fischer R."/>
            <person name="Miller B.L."/>
            <person name="Dyer P.S."/>
            <person name="Sachs M.S."/>
            <person name="Osmani S.A."/>
            <person name="Birren B.W."/>
        </authorList>
    </citation>
    <scope>NUCLEOTIDE SEQUENCE [LARGE SCALE GENOMIC DNA]</scope>
    <source>
        <strain>FGSC A4 / ATCC 38163 / CBS 112.46 / NRRL 194 / M139</strain>
    </source>
</reference>
<reference key="2">
    <citation type="journal article" date="2009" name="Fungal Genet. Biol.">
        <title>The 2008 update of the Aspergillus nidulans genome annotation: a community effort.</title>
        <authorList>
            <person name="Wortman J.R."/>
            <person name="Gilsenan J.M."/>
            <person name="Joardar V."/>
            <person name="Deegan J."/>
            <person name="Clutterbuck J."/>
            <person name="Andersen M.R."/>
            <person name="Archer D."/>
            <person name="Bencina M."/>
            <person name="Braus G."/>
            <person name="Coutinho P."/>
            <person name="von Dohren H."/>
            <person name="Doonan J."/>
            <person name="Driessen A.J."/>
            <person name="Durek P."/>
            <person name="Espeso E."/>
            <person name="Fekete E."/>
            <person name="Flipphi M."/>
            <person name="Estrada C.G."/>
            <person name="Geysens S."/>
            <person name="Goldman G."/>
            <person name="de Groot P.W."/>
            <person name="Hansen K."/>
            <person name="Harris S.D."/>
            <person name="Heinekamp T."/>
            <person name="Helmstaedt K."/>
            <person name="Henrissat B."/>
            <person name="Hofmann G."/>
            <person name="Homan T."/>
            <person name="Horio T."/>
            <person name="Horiuchi H."/>
            <person name="James S."/>
            <person name="Jones M."/>
            <person name="Karaffa L."/>
            <person name="Karanyi Z."/>
            <person name="Kato M."/>
            <person name="Keller N."/>
            <person name="Kelly D.E."/>
            <person name="Kiel J.A."/>
            <person name="Kim J.M."/>
            <person name="van der Klei I.J."/>
            <person name="Klis F.M."/>
            <person name="Kovalchuk A."/>
            <person name="Krasevec N."/>
            <person name="Kubicek C.P."/>
            <person name="Liu B."/>
            <person name="Maccabe A."/>
            <person name="Meyer V."/>
            <person name="Mirabito P."/>
            <person name="Miskei M."/>
            <person name="Mos M."/>
            <person name="Mullins J."/>
            <person name="Nelson D.R."/>
            <person name="Nielsen J."/>
            <person name="Oakley B.R."/>
            <person name="Osmani S.A."/>
            <person name="Pakula T."/>
            <person name="Paszewski A."/>
            <person name="Paulsen I."/>
            <person name="Pilsyk S."/>
            <person name="Pocsi I."/>
            <person name="Punt P.J."/>
            <person name="Ram A.F."/>
            <person name="Ren Q."/>
            <person name="Robellet X."/>
            <person name="Robson G."/>
            <person name="Seiboth B."/>
            <person name="van Solingen P."/>
            <person name="Specht T."/>
            <person name="Sun J."/>
            <person name="Taheri-Talesh N."/>
            <person name="Takeshita N."/>
            <person name="Ussery D."/>
            <person name="vanKuyk P.A."/>
            <person name="Visser H."/>
            <person name="van de Vondervoort P.J."/>
            <person name="de Vries R.P."/>
            <person name="Walton J."/>
            <person name="Xiang X."/>
            <person name="Xiong Y."/>
            <person name="Zeng A.P."/>
            <person name="Brandt B.W."/>
            <person name="Cornell M.J."/>
            <person name="van den Hondel C.A."/>
            <person name="Visser J."/>
            <person name="Oliver S.G."/>
            <person name="Turner G."/>
        </authorList>
    </citation>
    <scope>GENOME REANNOTATION</scope>
    <source>
        <strain>FGSC A4 / ATCC 38163 / CBS 112.46 / NRRL 194 / M139</strain>
    </source>
</reference>
<keyword id="KW-0106">Calcium</keyword>
<keyword id="KW-0119">Carbohydrate metabolism</keyword>
<keyword id="KW-0961">Cell wall biogenesis/degradation</keyword>
<keyword id="KW-0325">Glycoprotein</keyword>
<keyword id="KW-0456">Lyase</keyword>
<keyword id="KW-0624">Polysaccharide degradation</keyword>
<keyword id="KW-1185">Reference proteome</keyword>
<keyword id="KW-0964">Secreted</keyword>
<keyword id="KW-0732">Signal</keyword>
<feature type="signal peptide" evidence="2">
    <location>
        <begin position="1"/>
        <end position="17"/>
    </location>
</feature>
<feature type="chain" id="PRO_0000394578" description="Probable pectate lyase D">
    <location>
        <begin position="18"/>
        <end position="264"/>
    </location>
</feature>
<feature type="region of interest" description="Disordered" evidence="3">
    <location>
        <begin position="234"/>
        <end position="264"/>
    </location>
</feature>
<feature type="compositionally biased region" description="Acidic residues" evidence="3">
    <location>
        <begin position="235"/>
        <end position="245"/>
    </location>
</feature>
<feature type="compositionally biased region" description="Polar residues" evidence="3">
    <location>
        <begin position="246"/>
        <end position="256"/>
    </location>
</feature>
<feature type="glycosylation site" description="N-linked (GlcNAc...) asparagine" evidence="2">
    <location>
        <position position="60"/>
    </location>
</feature>
<name>PLYD_EMENI</name>
<dbReference type="EC" id="4.2.2.2"/>
<dbReference type="EMBL" id="AACD01000043">
    <property type="protein sequence ID" value="EAA64647.1"/>
    <property type="molecule type" value="Genomic_DNA"/>
</dbReference>
<dbReference type="EMBL" id="BN001307">
    <property type="protein sequence ID" value="CBF87063.1"/>
    <property type="molecule type" value="Genomic_DNA"/>
</dbReference>
<dbReference type="RefSeq" id="XP_660146.1">
    <property type="nucleotide sequence ID" value="XM_655054.1"/>
</dbReference>
<dbReference type="SMR" id="Q5BA88"/>
<dbReference type="STRING" id="227321.Q5BA88"/>
<dbReference type="CAZy" id="PL3">
    <property type="family name" value="Polysaccharide Lyase Family 3"/>
</dbReference>
<dbReference type="GlyCosmos" id="Q5BA88">
    <property type="glycosylation" value="1 site, No reported glycans"/>
</dbReference>
<dbReference type="EnsemblFungi" id="CBF87063">
    <property type="protein sequence ID" value="CBF87063"/>
    <property type="gene ID" value="ANIA_02542"/>
</dbReference>
<dbReference type="KEGG" id="ani:ANIA_02542"/>
<dbReference type="VEuPathDB" id="FungiDB:AN2542"/>
<dbReference type="eggNOG" id="ENOG502RYK9">
    <property type="taxonomic scope" value="Eukaryota"/>
</dbReference>
<dbReference type="HOGENOM" id="CLU_044863_3_0_1"/>
<dbReference type="InParanoid" id="Q5BA88"/>
<dbReference type="OMA" id="CDEQHAR"/>
<dbReference type="OrthoDB" id="441042at2759"/>
<dbReference type="Proteomes" id="UP000000560">
    <property type="component" value="Chromosome VII"/>
</dbReference>
<dbReference type="GO" id="GO:0005576">
    <property type="term" value="C:extracellular region"/>
    <property type="evidence" value="ECO:0007669"/>
    <property type="project" value="UniProtKB-SubCell"/>
</dbReference>
<dbReference type="GO" id="GO:0030570">
    <property type="term" value="F:pectate lyase activity"/>
    <property type="evidence" value="ECO:0007669"/>
    <property type="project" value="UniProtKB-EC"/>
</dbReference>
<dbReference type="GO" id="GO:0071555">
    <property type="term" value="P:cell wall organization"/>
    <property type="evidence" value="ECO:0007669"/>
    <property type="project" value="UniProtKB-KW"/>
</dbReference>
<dbReference type="GO" id="GO:0045490">
    <property type="term" value="P:pectin catabolic process"/>
    <property type="evidence" value="ECO:0000318"/>
    <property type="project" value="GO_Central"/>
</dbReference>
<dbReference type="Gene3D" id="2.160.20.10">
    <property type="entry name" value="Single-stranded right-handed beta-helix, Pectin lyase-like"/>
    <property type="match status" value="1"/>
</dbReference>
<dbReference type="InterPro" id="IPR004898">
    <property type="entry name" value="Pectate_lyase_PlyH/PlyE-like"/>
</dbReference>
<dbReference type="InterPro" id="IPR012334">
    <property type="entry name" value="Pectin_lyas_fold"/>
</dbReference>
<dbReference type="InterPro" id="IPR011050">
    <property type="entry name" value="Pectin_lyase_fold/virulence"/>
</dbReference>
<dbReference type="PANTHER" id="PTHR33407">
    <property type="entry name" value="PECTATE LYASE F-RELATED"/>
    <property type="match status" value="1"/>
</dbReference>
<dbReference type="PANTHER" id="PTHR33407:SF11">
    <property type="entry name" value="PECTATE LYASE H-RELATED"/>
    <property type="match status" value="1"/>
</dbReference>
<dbReference type="Pfam" id="PF03211">
    <property type="entry name" value="Pectate_lyase"/>
    <property type="match status" value="1"/>
</dbReference>
<dbReference type="SUPFAM" id="SSF51126">
    <property type="entry name" value="Pectin lyase-like"/>
    <property type="match status" value="1"/>
</dbReference>
<gene>
    <name type="primary">plyD</name>
    <name type="ORF">AN2542</name>
</gene>
<organism>
    <name type="scientific">Emericella nidulans (strain FGSC A4 / ATCC 38163 / CBS 112.46 / NRRL 194 / M139)</name>
    <name type="common">Aspergillus nidulans</name>
    <dbReference type="NCBI Taxonomy" id="227321"/>
    <lineage>
        <taxon>Eukaryota</taxon>
        <taxon>Fungi</taxon>
        <taxon>Dikarya</taxon>
        <taxon>Ascomycota</taxon>
        <taxon>Pezizomycotina</taxon>
        <taxon>Eurotiomycetes</taxon>
        <taxon>Eurotiomycetidae</taxon>
        <taxon>Eurotiales</taxon>
        <taxon>Aspergillaceae</taxon>
        <taxon>Aspergillus</taxon>
        <taxon>Aspergillus subgen. Nidulantes</taxon>
    </lineage>
</organism>
<evidence type="ECO:0000250" key="1"/>
<evidence type="ECO:0000255" key="2"/>
<evidence type="ECO:0000256" key="3">
    <source>
        <dbReference type="SAM" id="MobiDB-lite"/>
    </source>
</evidence>
<evidence type="ECO:0000305" key="4"/>
<sequence length="264" mass="27896">MFFKQLAVLSFATSALAAHGVRNPGTNSLNFNRIDKRFTFPIPESQGSQTFEATYTISGNETFDGGMKTYGRGVDCSGQAEGGDSDAVFIVKDGGTLKNAIIGADQIEGVHCEGSCTIENVWWEAVCEDALSLKTGDGPFTVIGGGAQNADDKVIQHNGGGTVSISGFTAYNFGKLYRSCGNCDEMYERHVTLESVTAVSGSASLVGINSNYGDTATIKSDTCVTDVDTVCTEYEGTDNNDEEPQEISTGPSNACQYTDPLPSC</sequence>
<accession>Q5BA88</accession>
<accession>C8VPS6</accession>